<accession>B5DFK3</accession>
<evidence type="ECO:0000250" key="1"/>
<evidence type="ECO:0000255" key="2">
    <source>
        <dbReference type="PROSITE-ProRule" id="PRU00108"/>
    </source>
</evidence>
<evidence type="ECO:0000256" key="3">
    <source>
        <dbReference type="SAM" id="MobiDB-lite"/>
    </source>
</evidence>
<evidence type="ECO:0000305" key="4"/>
<comment type="function">
    <text evidence="1">Sequence-specific transcription factor which is part of a developmental regulatory system that provides cells with specific positional identities on the anterior-posterior axis.</text>
</comment>
<comment type="subcellular location">
    <subcellularLocation>
        <location evidence="2">Nucleus</location>
    </subcellularLocation>
</comment>
<comment type="similarity">
    <text evidence="4">Belongs to the Abd-B homeobox family.</text>
</comment>
<protein>
    <recommendedName>
        <fullName>Homeobox protein Hox-D9</fullName>
    </recommendedName>
</protein>
<proteinExistence type="evidence at transcript level"/>
<sequence>MSSSGTLSNYYVDSLIGHEGDEVFAARFGPPGPGTQGRPAGVADGPAAAAEFASCSFAPKSSVFSASWSAVAAQPPAAATMSGLYHPYVSPPPLAAAEPGRYVRSWMEPLPGFPGGAGGGGGSGGGGGGGSGGPGPVPSPGGPANGRHYGIKPETGAAPAPSAASTSSSTSSSSSSKRTECSAARESQGSGGPEFPCNSFLRDKAAAAAAAAAGNGPGVGIGTGPGTGGSSEPSACSDHPSPGCPLKEEEKQPPQPPQQQLDPNNPAANWIHARSTRKKRCPYTKYQTLELEKEFLFNMYLTRDRRYEVARILNLTERQVKIWFQNRRMKMKKMSKEKCPKGD</sequence>
<feature type="chain" id="PRO_0000363862" description="Homeobox protein Hox-D9">
    <location>
        <begin position="1"/>
        <end position="343"/>
    </location>
</feature>
<feature type="DNA-binding region" description="Homeobox" evidence="2">
    <location>
        <begin position="276"/>
        <end position="335"/>
    </location>
</feature>
<feature type="region of interest" description="Disordered" evidence="3">
    <location>
        <begin position="113"/>
        <end position="196"/>
    </location>
</feature>
<feature type="region of interest" description="Disordered" evidence="3">
    <location>
        <begin position="220"/>
        <end position="267"/>
    </location>
</feature>
<feature type="compositionally biased region" description="Gly residues" evidence="3">
    <location>
        <begin position="113"/>
        <end position="134"/>
    </location>
</feature>
<feature type="compositionally biased region" description="Low complexity" evidence="3">
    <location>
        <begin position="157"/>
        <end position="176"/>
    </location>
</feature>
<feature type="compositionally biased region" description="Gly residues" evidence="3">
    <location>
        <begin position="220"/>
        <end position="229"/>
    </location>
</feature>
<reference key="1">
    <citation type="journal article" date="2004" name="Genome Res.">
        <title>The status, quality, and expansion of the NIH full-length cDNA project: the Mammalian Gene Collection (MGC).</title>
        <authorList>
            <consortium name="The MGC Project Team"/>
        </authorList>
    </citation>
    <scope>NUCLEOTIDE SEQUENCE [LARGE SCALE MRNA]</scope>
    <source>
        <tissue>Prostate</tissue>
    </source>
</reference>
<dbReference type="EMBL" id="BC169092">
    <property type="protein sequence ID" value="AAI69092.1"/>
    <property type="molecule type" value="mRNA"/>
</dbReference>
<dbReference type="RefSeq" id="NP_001166940.1">
    <property type="nucleotide sequence ID" value="NM_001173469.2"/>
</dbReference>
<dbReference type="BMRB" id="B5DFK3"/>
<dbReference type="SMR" id="B5DFK3"/>
<dbReference type="FunCoup" id="B5DFK3">
    <property type="interactions" value="15"/>
</dbReference>
<dbReference type="STRING" id="10116.ENSRNOP00000059218"/>
<dbReference type="PhosphoSitePlus" id="B5DFK3"/>
<dbReference type="PaxDb" id="10116-ENSRNOP00000059218"/>
<dbReference type="Ensembl" id="ENSRNOT00000065426.4">
    <property type="protein sequence ID" value="ENSRNOP00000059218.4"/>
    <property type="gene ID" value="ENSRNOG00000001580.7"/>
</dbReference>
<dbReference type="GeneID" id="688999"/>
<dbReference type="KEGG" id="rno:688999"/>
<dbReference type="AGR" id="RGD:1582908"/>
<dbReference type="CTD" id="3235"/>
<dbReference type="RGD" id="1582908">
    <property type="gene designation" value="Hoxd9"/>
</dbReference>
<dbReference type="eggNOG" id="KOG0487">
    <property type="taxonomic scope" value="Eukaryota"/>
</dbReference>
<dbReference type="InParanoid" id="B5DFK3"/>
<dbReference type="OMA" id="MRSWMEP"/>
<dbReference type="OrthoDB" id="6159439at2759"/>
<dbReference type="PhylomeDB" id="B5DFK3"/>
<dbReference type="PRO" id="PR:B5DFK3"/>
<dbReference type="Proteomes" id="UP000002494">
    <property type="component" value="Chromosome 3"/>
</dbReference>
<dbReference type="GO" id="GO:0005730">
    <property type="term" value="C:nucleolus"/>
    <property type="evidence" value="ECO:0007669"/>
    <property type="project" value="Ensembl"/>
</dbReference>
<dbReference type="GO" id="GO:0005654">
    <property type="term" value="C:nucleoplasm"/>
    <property type="evidence" value="ECO:0007669"/>
    <property type="project" value="Ensembl"/>
</dbReference>
<dbReference type="GO" id="GO:0005634">
    <property type="term" value="C:nucleus"/>
    <property type="evidence" value="ECO:0000266"/>
    <property type="project" value="RGD"/>
</dbReference>
<dbReference type="GO" id="GO:0003677">
    <property type="term" value="F:DNA binding"/>
    <property type="evidence" value="ECO:0000266"/>
    <property type="project" value="RGD"/>
</dbReference>
<dbReference type="GO" id="GO:0003700">
    <property type="term" value="F:DNA-binding transcription factor activity"/>
    <property type="evidence" value="ECO:0000266"/>
    <property type="project" value="RGD"/>
</dbReference>
<dbReference type="GO" id="GO:0001227">
    <property type="term" value="F:DNA-binding transcription repressor activity, RNA polymerase II-specific"/>
    <property type="evidence" value="ECO:0000266"/>
    <property type="project" value="RGD"/>
</dbReference>
<dbReference type="GO" id="GO:0000978">
    <property type="term" value="F:RNA polymerase II cis-regulatory region sequence-specific DNA binding"/>
    <property type="evidence" value="ECO:0000318"/>
    <property type="project" value="GO_Central"/>
</dbReference>
<dbReference type="GO" id="GO:0000977">
    <property type="term" value="F:RNA polymerase II transcription regulatory region sequence-specific DNA binding"/>
    <property type="evidence" value="ECO:0000266"/>
    <property type="project" value="RGD"/>
</dbReference>
<dbReference type="GO" id="GO:1990837">
    <property type="term" value="F:sequence-specific double-stranded DNA binding"/>
    <property type="evidence" value="ECO:0000266"/>
    <property type="project" value="RGD"/>
</dbReference>
<dbReference type="GO" id="GO:0008344">
    <property type="term" value="P:adult locomotory behavior"/>
    <property type="evidence" value="ECO:0000266"/>
    <property type="project" value="RGD"/>
</dbReference>
<dbReference type="GO" id="GO:0009952">
    <property type="term" value="P:anterior/posterior pattern specification"/>
    <property type="evidence" value="ECO:0000266"/>
    <property type="project" value="RGD"/>
</dbReference>
<dbReference type="GO" id="GO:0006351">
    <property type="term" value="P:DNA-templated transcription"/>
    <property type="evidence" value="ECO:0007669"/>
    <property type="project" value="InterPro"/>
</dbReference>
<dbReference type="GO" id="GO:0035115">
    <property type="term" value="P:embryonic forelimb morphogenesis"/>
    <property type="evidence" value="ECO:0000266"/>
    <property type="project" value="RGD"/>
</dbReference>
<dbReference type="GO" id="GO:0048706">
    <property type="term" value="P:embryonic skeletal system development"/>
    <property type="evidence" value="ECO:0000266"/>
    <property type="project" value="RGD"/>
</dbReference>
<dbReference type="GO" id="GO:0048704">
    <property type="term" value="P:embryonic skeletal system morphogenesis"/>
    <property type="evidence" value="ECO:0000266"/>
    <property type="project" value="RGD"/>
</dbReference>
<dbReference type="GO" id="GO:0035136">
    <property type="term" value="P:forelimb morphogenesis"/>
    <property type="evidence" value="ECO:0000266"/>
    <property type="project" value="RGD"/>
</dbReference>
<dbReference type="GO" id="GO:0035137">
    <property type="term" value="P:hindlimb morphogenesis"/>
    <property type="evidence" value="ECO:0000266"/>
    <property type="project" value="RGD"/>
</dbReference>
<dbReference type="GO" id="GO:0030879">
    <property type="term" value="P:mammary gland development"/>
    <property type="evidence" value="ECO:0000266"/>
    <property type="project" value="RGD"/>
</dbReference>
<dbReference type="GO" id="GO:0000122">
    <property type="term" value="P:negative regulation of transcription by RNA polymerase II"/>
    <property type="evidence" value="ECO:0000266"/>
    <property type="project" value="RGD"/>
</dbReference>
<dbReference type="GO" id="GO:0048935">
    <property type="term" value="P:peripheral nervous system neuron development"/>
    <property type="evidence" value="ECO:0000266"/>
    <property type="project" value="RGD"/>
</dbReference>
<dbReference type="GO" id="GO:0045944">
    <property type="term" value="P:positive regulation of transcription by RNA polymerase II"/>
    <property type="evidence" value="ECO:0000266"/>
    <property type="project" value="RGD"/>
</dbReference>
<dbReference type="GO" id="GO:0009954">
    <property type="term" value="P:proximal/distal pattern formation"/>
    <property type="evidence" value="ECO:0000266"/>
    <property type="project" value="RGD"/>
</dbReference>
<dbReference type="GO" id="GO:0010468">
    <property type="term" value="P:regulation of gene expression"/>
    <property type="evidence" value="ECO:0000266"/>
    <property type="project" value="RGD"/>
</dbReference>
<dbReference type="GO" id="GO:0006357">
    <property type="term" value="P:regulation of transcription by RNA polymerase II"/>
    <property type="evidence" value="ECO:0000318"/>
    <property type="project" value="GO_Central"/>
</dbReference>
<dbReference type="GO" id="GO:0007338">
    <property type="term" value="P:single fertilization"/>
    <property type="evidence" value="ECO:0000266"/>
    <property type="project" value="RGD"/>
</dbReference>
<dbReference type="GO" id="GO:0007519">
    <property type="term" value="P:skeletal muscle tissue development"/>
    <property type="evidence" value="ECO:0000266"/>
    <property type="project" value="RGD"/>
</dbReference>
<dbReference type="CDD" id="cd00086">
    <property type="entry name" value="homeodomain"/>
    <property type="match status" value="1"/>
</dbReference>
<dbReference type="FunFam" id="1.10.10.60:FF:000018">
    <property type="entry name" value="Homeobox A10"/>
    <property type="match status" value="1"/>
</dbReference>
<dbReference type="Gene3D" id="1.10.10.60">
    <property type="entry name" value="Homeodomain-like"/>
    <property type="match status" value="1"/>
</dbReference>
<dbReference type="InterPro" id="IPR050803">
    <property type="entry name" value="Abd-B_homeobox_TF"/>
</dbReference>
<dbReference type="InterPro" id="IPR001356">
    <property type="entry name" value="HD"/>
</dbReference>
<dbReference type="InterPro" id="IPR020479">
    <property type="entry name" value="HD_metazoa"/>
</dbReference>
<dbReference type="InterPro" id="IPR017970">
    <property type="entry name" value="Homeobox_CS"/>
</dbReference>
<dbReference type="InterPro" id="IPR009057">
    <property type="entry name" value="Homeodomain-like_sf"/>
</dbReference>
<dbReference type="InterPro" id="IPR006711">
    <property type="entry name" value="Hox9_activation_N"/>
</dbReference>
<dbReference type="PANTHER" id="PTHR45970">
    <property type="entry name" value="AGAP004664-PA"/>
    <property type="match status" value="1"/>
</dbReference>
<dbReference type="PANTHER" id="PTHR45970:SF4">
    <property type="entry name" value="HOMEOBOX PROTEIN HOX-D9"/>
    <property type="match status" value="1"/>
</dbReference>
<dbReference type="Pfam" id="PF00046">
    <property type="entry name" value="Homeodomain"/>
    <property type="match status" value="1"/>
</dbReference>
<dbReference type="Pfam" id="PF04617">
    <property type="entry name" value="Hox9_act"/>
    <property type="match status" value="1"/>
</dbReference>
<dbReference type="PRINTS" id="PR00024">
    <property type="entry name" value="HOMEOBOX"/>
</dbReference>
<dbReference type="SMART" id="SM00389">
    <property type="entry name" value="HOX"/>
    <property type="match status" value="1"/>
</dbReference>
<dbReference type="SUPFAM" id="SSF46689">
    <property type="entry name" value="Homeodomain-like"/>
    <property type="match status" value="1"/>
</dbReference>
<dbReference type="PROSITE" id="PS00027">
    <property type="entry name" value="HOMEOBOX_1"/>
    <property type="match status" value="1"/>
</dbReference>
<dbReference type="PROSITE" id="PS50071">
    <property type="entry name" value="HOMEOBOX_2"/>
    <property type="match status" value="1"/>
</dbReference>
<gene>
    <name type="primary">Hoxd9</name>
</gene>
<organism>
    <name type="scientific">Rattus norvegicus</name>
    <name type="common">Rat</name>
    <dbReference type="NCBI Taxonomy" id="10116"/>
    <lineage>
        <taxon>Eukaryota</taxon>
        <taxon>Metazoa</taxon>
        <taxon>Chordata</taxon>
        <taxon>Craniata</taxon>
        <taxon>Vertebrata</taxon>
        <taxon>Euteleostomi</taxon>
        <taxon>Mammalia</taxon>
        <taxon>Eutheria</taxon>
        <taxon>Euarchontoglires</taxon>
        <taxon>Glires</taxon>
        <taxon>Rodentia</taxon>
        <taxon>Myomorpha</taxon>
        <taxon>Muroidea</taxon>
        <taxon>Muridae</taxon>
        <taxon>Murinae</taxon>
        <taxon>Rattus</taxon>
    </lineage>
</organism>
<name>HXD9_RAT</name>
<keyword id="KW-0217">Developmental protein</keyword>
<keyword id="KW-0238">DNA-binding</keyword>
<keyword id="KW-0371">Homeobox</keyword>
<keyword id="KW-0539">Nucleus</keyword>
<keyword id="KW-1185">Reference proteome</keyword>
<keyword id="KW-0804">Transcription</keyword>
<keyword id="KW-0805">Transcription regulation</keyword>